<protein>
    <recommendedName>
        <fullName evidence="1">O-phosphoserine--tRNA(Cys) ligase</fullName>
        <shortName evidence="1">O-phosphoserine--tRNA ligase</shortName>
        <ecNumber evidence="1">6.1.1.27</ecNumber>
    </recommendedName>
    <alternativeName>
        <fullName evidence="1">Non-canonical O-phosphoseryl-tRNA(Cys) synthetase</fullName>
    </alternativeName>
    <alternativeName>
        <fullName evidence="1">O-phosphoseryl-tRNA(Cys) synthetase</fullName>
        <shortName evidence="1">SepRS</shortName>
    </alternativeName>
</protein>
<accession>Q8TY66</accession>
<reference key="1">
    <citation type="journal article" date="2002" name="Proc. Natl. Acad. Sci. U.S.A.">
        <title>The complete genome of hyperthermophile Methanopyrus kandleri AV19 and monophyly of archaeal methanogens.</title>
        <authorList>
            <person name="Slesarev A.I."/>
            <person name="Mezhevaya K.V."/>
            <person name="Makarova K.S."/>
            <person name="Polushin N.N."/>
            <person name="Shcherbinina O.V."/>
            <person name="Shakhova V.V."/>
            <person name="Belova G.I."/>
            <person name="Aravind L."/>
            <person name="Natale D.A."/>
            <person name="Rogozin I.B."/>
            <person name="Tatusov R.L."/>
            <person name="Wolf Y.I."/>
            <person name="Stetter K.O."/>
            <person name="Malykh A.G."/>
            <person name="Koonin E.V."/>
            <person name="Kozyavkin S.A."/>
        </authorList>
    </citation>
    <scope>NUCLEOTIDE SEQUENCE [LARGE SCALE GENOMIC DNA]</scope>
    <source>
        <strain>AV19 / DSM 6324 / JCM 9639 / NBRC 100938</strain>
    </source>
</reference>
<keyword id="KW-0030">Aminoacyl-tRNA synthetase</keyword>
<keyword id="KW-0067">ATP-binding</keyword>
<keyword id="KW-0436">Ligase</keyword>
<keyword id="KW-0547">Nucleotide-binding</keyword>
<keyword id="KW-0648">Protein biosynthesis</keyword>
<keyword id="KW-1185">Reference proteome</keyword>
<name>SEPS_METKA</name>
<sequence length="544" mass="61614">MPFDRDKLEELRSLAQRDFDRAWKEGAKLVREPGLRDRYPRLKVETGEPHPLFETIQQLREAYLRAGFREVVNPVIIPEEEVYKQFGPEAAAVLDRCFYLAGLPRPDVGLGADKVEKLAEVLGREPSEDEVERLRETLHAYKKGEIDGDELTHEIAEALDTDDGTAVRILDEVFPELKRLKPEPLEPPLTLRSHMTAGWFITLSEILKREDPPLKLFSIDRCFRREQREDESHLMTYHSASCVVVSDDVTVDTGKAVAEAILRQFGFEDFEFVPDEKMSKYYVPGTQTEVYAYHPDLEDSIEDEELGPGWVEIATFGLYSPVALAEYGIDYPVMNLGIGVERLCMVLHGIDDVRSLAYVEYEPWEPSDLELARMIDYERKPATSFGERLVREVVRGLHEHADEEGPVEVELFRGEFGDREVVVHAVEEEKGEPLAGPAAFNRVYVLDGNLYAVPPEGDFGREIREEGVYSGVSFEEGLAARLAYEVEELLATGGGETTVSVRKVSRPSQVNLSLPRKLLRYVTKKGGEIEIKGPVFVTLRAEVR</sequence>
<gene>
    <name evidence="1" type="primary">sepS</name>
    <name type="ordered locus">MK0439</name>
</gene>
<evidence type="ECO:0000255" key="1">
    <source>
        <dbReference type="HAMAP-Rule" id="MF_01674"/>
    </source>
</evidence>
<proteinExistence type="inferred from homology"/>
<feature type="chain" id="PRO_0000363757" description="O-phosphoserine--tRNA(Cys) ligase">
    <location>
        <begin position="1"/>
        <end position="544"/>
    </location>
</feature>
<feature type="binding site" evidence="1">
    <location>
        <begin position="194"/>
        <end position="196"/>
    </location>
    <ligand>
        <name>substrate</name>
    </ligand>
</feature>
<feature type="binding site" evidence="1">
    <location>
        <begin position="239"/>
        <end position="241"/>
    </location>
    <ligand>
        <name>substrate</name>
    </ligand>
</feature>
<feature type="binding site" evidence="1">
    <location>
        <begin position="281"/>
        <end position="282"/>
    </location>
    <ligand>
        <name>substrate</name>
    </ligand>
</feature>
<feature type="binding site" evidence="1">
    <location>
        <position position="335"/>
    </location>
    <ligand>
        <name>substrate</name>
    </ligand>
</feature>
<organism>
    <name type="scientific">Methanopyrus kandleri (strain AV19 / DSM 6324 / JCM 9639 / NBRC 100938)</name>
    <dbReference type="NCBI Taxonomy" id="190192"/>
    <lineage>
        <taxon>Archaea</taxon>
        <taxon>Methanobacteriati</taxon>
        <taxon>Methanobacteriota</taxon>
        <taxon>Methanomada group</taxon>
        <taxon>Methanopyri</taxon>
        <taxon>Methanopyrales</taxon>
        <taxon>Methanopyraceae</taxon>
        <taxon>Methanopyrus</taxon>
    </lineage>
</organism>
<comment type="function">
    <text evidence="1">Catalyzes the attachment of O-phosphoserine (Sep) to tRNA(Cys).</text>
</comment>
<comment type="catalytic activity">
    <reaction evidence="1">
        <text>tRNA(Cys) + O-phospho-L-serine + ATP = O-phospho-L-seryl-tRNA(Cys) + AMP + diphosphate</text>
        <dbReference type="Rhea" id="RHEA:25678"/>
        <dbReference type="Rhea" id="RHEA-COMP:9661"/>
        <dbReference type="Rhea" id="RHEA-COMP:9719"/>
        <dbReference type="ChEBI" id="CHEBI:30616"/>
        <dbReference type="ChEBI" id="CHEBI:33019"/>
        <dbReference type="ChEBI" id="CHEBI:57524"/>
        <dbReference type="ChEBI" id="CHEBI:78442"/>
        <dbReference type="ChEBI" id="CHEBI:78551"/>
        <dbReference type="ChEBI" id="CHEBI:456215"/>
        <dbReference type="EC" id="6.1.1.27"/>
    </reaction>
</comment>
<comment type="subunit">
    <text evidence="1">Homotetramer. Interacts with SepCysS.</text>
</comment>
<comment type="similarity">
    <text evidence="1">Belongs to the class-II aminoacyl-tRNA synthetase family. O-phosphoseryl-tRNA(Cys) synthetase subfamily.</text>
</comment>
<dbReference type="EC" id="6.1.1.27" evidence="1"/>
<dbReference type="EMBL" id="AE009439">
    <property type="protein sequence ID" value="AAM01654.1"/>
    <property type="molecule type" value="Genomic_DNA"/>
</dbReference>
<dbReference type="RefSeq" id="WP_011018809.1">
    <property type="nucleotide sequence ID" value="NC_003551.1"/>
</dbReference>
<dbReference type="SMR" id="Q8TY66"/>
<dbReference type="FunCoup" id="Q8TY66">
    <property type="interactions" value="27"/>
</dbReference>
<dbReference type="STRING" id="190192.MK0439"/>
<dbReference type="PaxDb" id="190192-MK0439"/>
<dbReference type="EnsemblBacteria" id="AAM01654">
    <property type="protein sequence ID" value="AAM01654"/>
    <property type="gene ID" value="MK0439"/>
</dbReference>
<dbReference type="GeneID" id="1477742"/>
<dbReference type="KEGG" id="mka:MK0439"/>
<dbReference type="PATRIC" id="fig|190192.8.peg.468"/>
<dbReference type="HOGENOM" id="CLU_506822_0_0_2"/>
<dbReference type="InParanoid" id="Q8TY66"/>
<dbReference type="OrthoDB" id="145125at2157"/>
<dbReference type="Proteomes" id="UP000001826">
    <property type="component" value="Chromosome"/>
</dbReference>
<dbReference type="GO" id="GO:0005524">
    <property type="term" value="F:ATP binding"/>
    <property type="evidence" value="ECO:0007669"/>
    <property type="project" value="UniProtKB-UniRule"/>
</dbReference>
<dbReference type="GO" id="GO:0043816">
    <property type="term" value="F:phosphoserine-tRNA(Cys) ligase activity"/>
    <property type="evidence" value="ECO:0007669"/>
    <property type="project" value="UniProtKB-EC"/>
</dbReference>
<dbReference type="GO" id="GO:0000049">
    <property type="term" value="F:tRNA binding"/>
    <property type="evidence" value="ECO:0007669"/>
    <property type="project" value="InterPro"/>
</dbReference>
<dbReference type="GO" id="GO:0006412">
    <property type="term" value="P:translation"/>
    <property type="evidence" value="ECO:0007669"/>
    <property type="project" value="UniProtKB-KW"/>
</dbReference>
<dbReference type="GO" id="GO:0043039">
    <property type="term" value="P:tRNA aminoacylation"/>
    <property type="evidence" value="ECO:0007669"/>
    <property type="project" value="UniProtKB-UniRule"/>
</dbReference>
<dbReference type="Gene3D" id="3.30.930.10">
    <property type="entry name" value="Bira Bifunctional Protein, Domain 2"/>
    <property type="match status" value="1"/>
</dbReference>
<dbReference type="HAMAP" id="MF_01674">
    <property type="entry name" value="Sep_tRNA_synth"/>
    <property type="match status" value="1"/>
</dbReference>
<dbReference type="InterPro" id="IPR006195">
    <property type="entry name" value="aa-tRNA-synth_II"/>
</dbReference>
<dbReference type="InterPro" id="IPR045864">
    <property type="entry name" value="aa-tRNA-synth_II/BPL/LPL"/>
</dbReference>
<dbReference type="InterPro" id="IPR005246">
    <property type="entry name" value="O-Pseryl-tRNA(Cys)_ligase"/>
</dbReference>
<dbReference type="InterPro" id="IPR002319">
    <property type="entry name" value="Phenylalanyl-tRNA_Synthase"/>
</dbReference>
<dbReference type="NCBIfam" id="TIGR00470">
    <property type="entry name" value="sepS"/>
    <property type="match status" value="1"/>
</dbReference>
<dbReference type="Pfam" id="PF01409">
    <property type="entry name" value="tRNA-synt_2d"/>
    <property type="match status" value="1"/>
</dbReference>
<dbReference type="SUPFAM" id="SSF55681">
    <property type="entry name" value="Class II aaRS and biotin synthetases"/>
    <property type="match status" value="1"/>
</dbReference>
<dbReference type="PROSITE" id="PS50862">
    <property type="entry name" value="AA_TRNA_LIGASE_II"/>
    <property type="match status" value="1"/>
</dbReference>